<protein>
    <recommendedName>
        <fullName evidence="1">1-deoxy-D-xylulose 5-phosphate reductoisomerase</fullName>
        <shortName evidence="1">DXP reductoisomerase</shortName>
        <ecNumber evidence="1">1.1.1.267</ecNumber>
    </recommendedName>
    <alternativeName>
        <fullName evidence="1">1-deoxyxylulose-5-phosphate reductoisomerase</fullName>
    </alternativeName>
    <alternativeName>
        <fullName evidence="1">2-C-methyl-D-erythritol 4-phosphate synthase</fullName>
    </alternativeName>
</protein>
<organism>
    <name type="scientific">Mycobacterium leprae (strain Br4923)</name>
    <dbReference type="NCBI Taxonomy" id="561304"/>
    <lineage>
        <taxon>Bacteria</taxon>
        <taxon>Bacillati</taxon>
        <taxon>Actinomycetota</taxon>
        <taxon>Actinomycetes</taxon>
        <taxon>Mycobacteriales</taxon>
        <taxon>Mycobacteriaceae</taxon>
        <taxon>Mycobacterium</taxon>
    </lineage>
</organism>
<feature type="chain" id="PRO_1000124101" description="1-deoxy-D-xylulose 5-phosphate reductoisomerase">
    <location>
        <begin position="1"/>
        <end position="406"/>
    </location>
</feature>
<feature type="binding site" evidence="1">
    <location>
        <position position="21"/>
    </location>
    <ligand>
        <name>NADPH</name>
        <dbReference type="ChEBI" id="CHEBI:57783"/>
    </ligand>
</feature>
<feature type="binding site" evidence="1">
    <location>
        <position position="22"/>
    </location>
    <ligand>
        <name>NADPH</name>
        <dbReference type="ChEBI" id="CHEBI:57783"/>
    </ligand>
</feature>
<feature type="binding site" evidence="1">
    <location>
        <position position="23"/>
    </location>
    <ligand>
        <name>NADPH</name>
        <dbReference type="ChEBI" id="CHEBI:57783"/>
    </ligand>
</feature>
<feature type="binding site" evidence="1">
    <location>
        <position position="24"/>
    </location>
    <ligand>
        <name>NADPH</name>
        <dbReference type="ChEBI" id="CHEBI:57783"/>
    </ligand>
</feature>
<feature type="binding site" evidence="1">
    <location>
        <position position="47"/>
    </location>
    <ligand>
        <name>NADPH</name>
        <dbReference type="ChEBI" id="CHEBI:57783"/>
    </ligand>
</feature>
<feature type="binding site" evidence="1">
    <location>
        <position position="50"/>
    </location>
    <ligand>
        <name>NADPH</name>
        <dbReference type="ChEBI" id="CHEBI:57783"/>
    </ligand>
</feature>
<feature type="binding site" evidence="1">
    <location>
        <position position="127"/>
    </location>
    <ligand>
        <name>NADPH</name>
        <dbReference type="ChEBI" id="CHEBI:57783"/>
    </ligand>
</feature>
<feature type="binding site" evidence="1">
    <location>
        <position position="128"/>
    </location>
    <ligand>
        <name>1-deoxy-D-xylulose 5-phosphate</name>
        <dbReference type="ChEBI" id="CHEBI:57792"/>
    </ligand>
</feature>
<feature type="binding site" evidence="1">
    <location>
        <position position="129"/>
    </location>
    <ligand>
        <name>NADPH</name>
        <dbReference type="ChEBI" id="CHEBI:57783"/>
    </ligand>
</feature>
<feature type="binding site" evidence="1">
    <location>
        <position position="151"/>
    </location>
    <ligand>
        <name>Mn(2+)</name>
        <dbReference type="ChEBI" id="CHEBI:29035"/>
    </ligand>
</feature>
<feature type="binding site" evidence="1">
    <location>
        <position position="152"/>
    </location>
    <ligand>
        <name>1-deoxy-D-xylulose 5-phosphate</name>
        <dbReference type="ChEBI" id="CHEBI:57792"/>
    </ligand>
</feature>
<feature type="binding site" evidence="1">
    <location>
        <position position="153"/>
    </location>
    <ligand>
        <name>1-deoxy-D-xylulose 5-phosphate</name>
        <dbReference type="ChEBI" id="CHEBI:57792"/>
    </ligand>
</feature>
<feature type="binding site" evidence="1">
    <location>
        <position position="153"/>
    </location>
    <ligand>
        <name>Mn(2+)</name>
        <dbReference type="ChEBI" id="CHEBI:29035"/>
    </ligand>
</feature>
<feature type="binding site" evidence="1">
    <location>
        <position position="177"/>
    </location>
    <ligand>
        <name>1-deoxy-D-xylulose 5-phosphate</name>
        <dbReference type="ChEBI" id="CHEBI:57792"/>
    </ligand>
</feature>
<feature type="binding site" evidence="1">
    <location>
        <position position="200"/>
    </location>
    <ligand>
        <name>1-deoxy-D-xylulose 5-phosphate</name>
        <dbReference type="ChEBI" id="CHEBI:57792"/>
    </ligand>
</feature>
<feature type="binding site" evidence="1">
    <location>
        <position position="206"/>
    </location>
    <ligand>
        <name>NADPH</name>
        <dbReference type="ChEBI" id="CHEBI:57783"/>
    </ligand>
</feature>
<feature type="binding site" evidence="1">
    <location>
        <position position="213"/>
    </location>
    <ligand>
        <name>1-deoxy-D-xylulose 5-phosphate</name>
        <dbReference type="ChEBI" id="CHEBI:57792"/>
    </ligand>
</feature>
<feature type="binding site" evidence="1">
    <location>
        <position position="218"/>
    </location>
    <ligand>
        <name>1-deoxy-D-xylulose 5-phosphate</name>
        <dbReference type="ChEBI" id="CHEBI:57792"/>
    </ligand>
</feature>
<feature type="binding site" evidence="1">
    <location>
        <position position="219"/>
    </location>
    <ligand>
        <name>1-deoxy-D-xylulose 5-phosphate</name>
        <dbReference type="ChEBI" id="CHEBI:57792"/>
    </ligand>
</feature>
<feature type="binding site" evidence="1">
    <location>
        <position position="222"/>
    </location>
    <ligand>
        <name>1-deoxy-D-xylulose 5-phosphate</name>
        <dbReference type="ChEBI" id="CHEBI:57792"/>
    </ligand>
</feature>
<feature type="binding site" evidence="1">
    <location>
        <position position="222"/>
    </location>
    <ligand>
        <name>Mn(2+)</name>
        <dbReference type="ChEBI" id="CHEBI:29035"/>
    </ligand>
</feature>
<comment type="function">
    <text evidence="1">Catalyzes the NADPH-dependent rearrangement and reduction of 1-deoxy-D-xylulose-5-phosphate (DXP) to 2-C-methyl-D-erythritol 4-phosphate (MEP).</text>
</comment>
<comment type="catalytic activity">
    <reaction evidence="1">
        <text>2-C-methyl-D-erythritol 4-phosphate + NADP(+) = 1-deoxy-D-xylulose 5-phosphate + NADPH + H(+)</text>
        <dbReference type="Rhea" id="RHEA:13717"/>
        <dbReference type="ChEBI" id="CHEBI:15378"/>
        <dbReference type="ChEBI" id="CHEBI:57783"/>
        <dbReference type="ChEBI" id="CHEBI:57792"/>
        <dbReference type="ChEBI" id="CHEBI:58262"/>
        <dbReference type="ChEBI" id="CHEBI:58349"/>
        <dbReference type="EC" id="1.1.1.267"/>
    </reaction>
    <physiologicalReaction direction="right-to-left" evidence="1">
        <dbReference type="Rhea" id="RHEA:13719"/>
    </physiologicalReaction>
</comment>
<comment type="cofactor">
    <cofactor evidence="1">
        <name>Mg(2+)</name>
        <dbReference type="ChEBI" id="CHEBI:18420"/>
    </cofactor>
    <cofactor evidence="1">
        <name>Mn(2+)</name>
        <dbReference type="ChEBI" id="CHEBI:29035"/>
    </cofactor>
</comment>
<comment type="pathway">
    <text evidence="1">Isoprenoid biosynthesis; isopentenyl diphosphate biosynthesis via DXP pathway; isopentenyl diphosphate from 1-deoxy-D-xylulose 5-phosphate: step 1/6.</text>
</comment>
<comment type="similarity">
    <text evidence="1">Belongs to the DXR family.</text>
</comment>
<gene>
    <name evidence="1" type="primary">dxr</name>
    <name type="ordered locus">MLBr01583</name>
</gene>
<name>DXR_MYCLB</name>
<sequence>MNNPIEGHAGGRLRVLVLGSTGSIGTQALEVIAANPDRFEVVGLAAGGAQLDTLLRQRAATGVTNIAIADDRAAQLAGDIPYHGTDAVTRLVEETEADVVLNALVGALGLRPTLAALHTGARLALANKESLVAGGSLVLAAAQPGQIVPVDSEHSALAQCLRGGTPDEVAKLVLTASGGPFRGWNAGDLERVTPEQAGVHPTWSMGTMNTLNSASLVNKGLELIEANLLFGIPYDRIEVVVHPQSIVHSMVTFIDGSTIAQASPPDMKLPISLALGWPQRVGGAARACAFTTASTWEFEPLDIDVFPAVELARHAGQIGGCMTAIYDAANEEAAEAFLQGRIGFPAIVATIADVLQRADQWAPQWGEGPATVDDVLDAQRWARERALCAVATASSGKVSDMVLERS</sequence>
<reference key="1">
    <citation type="journal article" date="2009" name="Nat. Genet.">
        <title>Comparative genomic and phylogeographic analysis of Mycobacterium leprae.</title>
        <authorList>
            <person name="Monot M."/>
            <person name="Honore N."/>
            <person name="Garnier T."/>
            <person name="Zidane N."/>
            <person name="Sherafi D."/>
            <person name="Paniz-Mondolfi A."/>
            <person name="Matsuoka M."/>
            <person name="Taylor G.M."/>
            <person name="Donoghue H.D."/>
            <person name="Bouwman A."/>
            <person name="Mays S."/>
            <person name="Watson C."/>
            <person name="Lockwood D."/>
            <person name="Khamispour A."/>
            <person name="Dowlati Y."/>
            <person name="Jianping S."/>
            <person name="Rea T.H."/>
            <person name="Vera-Cabrera L."/>
            <person name="Stefani M.M."/>
            <person name="Banu S."/>
            <person name="Macdonald M."/>
            <person name="Sapkota B.R."/>
            <person name="Spencer J.S."/>
            <person name="Thomas J."/>
            <person name="Harshman K."/>
            <person name="Singh P."/>
            <person name="Busso P."/>
            <person name="Gattiker A."/>
            <person name="Rougemont J."/>
            <person name="Brennan P.J."/>
            <person name="Cole S.T."/>
        </authorList>
    </citation>
    <scope>NUCLEOTIDE SEQUENCE [LARGE SCALE GENOMIC DNA]</scope>
    <source>
        <strain>Br4923</strain>
    </source>
</reference>
<dbReference type="EC" id="1.1.1.267" evidence="1"/>
<dbReference type="EMBL" id="FM211192">
    <property type="protein sequence ID" value="CAR71678.1"/>
    <property type="molecule type" value="Genomic_DNA"/>
</dbReference>
<dbReference type="SMR" id="B8ZRU7"/>
<dbReference type="KEGG" id="mlb:MLBr01583"/>
<dbReference type="HOGENOM" id="CLU_035714_4_0_11"/>
<dbReference type="UniPathway" id="UPA00056">
    <property type="reaction ID" value="UER00092"/>
</dbReference>
<dbReference type="Proteomes" id="UP000006900">
    <property type="component" value="Chromosome"/>
</dbReference>
<dbReference type="GO" id="GO:0030604">
    <property type="term" value="F:1-deoxy-D-xylulose-5-phosphate reductoisomerase activity"/>
    <property type="evidence" value="ECO:0007669"/>
    <property type="project" value="UniProtKB-UniRule"/>
</dbReference>
<dbReference type="GO" id="GO:0030145">
    <property type="term" value="F:manganese ion binding"/>
    <property type="evidence" value="ECO:0007669"/>
    <property type="project" value="TreeGrafter"/>
</dbReference>
<dbReference type="GO" id="GO:0070402">
    <property type="term" value="F:NADPH binding"/>
    <property type="evidence" value="ECO:0007669"/>
    <property type="project" value="InterPro"/>
</dbReference>
<dbReference type="GO" id="GO:0051484">
    <property type="term" value="P:isopentenyl diphosphate biosynthetic process, methylerythritol 4-phosphate pathway involved in terpenoid biosynthetic process"/>
    <property type="evidence" value="ECO:0007669"/>
    <property type="project" value="TreeGrafter"/>
</dbReference>
<dbReference type="FunFam" id="3.40.50.720:FF:000045">
    <property type="entry name" value="1-deoxy-D-xylulose 5-phosphate reductoisomerase"/>
    <property type="match status" value="1"/>
</dbReference>
<dbReference type="Gene3D" id="1.10.1740.10">
    <property type="match status" value="1"/>
</dbReference>
<dbReference type="Gene3D" id="3.40.50.720">
    <property type="entry name" value="NAD(P)-binding Rossmann-like Domain"/>
    <property type="match status" value="1"/>
</dbReference>
<dbReference type="HAMAP" id="MF_00183">
    <property type="entry name" value="DXP_reductoisom"/>
    <property type="match status" value="1"/>
</dbReference>
<dbReference type="InterPro" id="IPR003821">
    <property type="entry name" value="DXP_reductoisomerase"/>
</dbReference>
<dbReference type="InterPro" id="IPR013644">
    <property type="entry name" value="DXP_reductoisomerase_C"/>
</dbReference>
<dbReference type="InterPro" id="IPR013512">
    <property type="entry name" value="DXP_reductoisomerase_N"/>
</dbReference>
<dbReference type="InterPro" id="IPR026877">
    <property type="entry name" value="DXPR_C"/>
</dbReference>
<dbReference type="InterPro" id="IPR036169">
    <property type="entry name" value="DXPR_C_sf"/>
</dbReference>
<dbReference type="InterPro" id="IPR036291">
    <property type="entry name" value="NAD(P)-bd_dom_sf"/>
</dbReference>
<dbReference type="NCBIfam" id="TIGR00243">
    <property type="entry name" value="Dxr"/>
    <property type="match status" value="1"/>
</dbReference>
<dbReference type="PANTHER" id="PTHR30525">
    <property type="entry name" value="1-DEOXY-D-XYLULOSE 5-PHOSPHATE REDUCTOISOMERASE"/>
    <property type="match status" value="1"/>
</dbReference>
<dbReference type="PANTHER" id="PTHR30525:SF0">
    <property type="entry name" value="1-DEOXY-D-XYLULOSE 5-PHOSPHATE REDUCTOISOMERASE, CHLOROPLASTIC"/>
    <property type="match status" value="1"/>
</dbReference>
<dbReference type="Pfam" id="PF08436">
    <property type="entry name" value="DXP_redisom_C"/>
    <property type="match status" value="1"/>
</dbReference>
<dbReference type="Pfam" id="PF02670">
    <property type="entry name" value="DXP_reductoisom"/>
    <property type="match status" value="1"/>
</dbReference>
<dbReference type="Pfam" id="PF13288">
    <property type="entry name" value="DXPR_C"/>
    <property type="match status" value="1"/>
</dbReference>
<dbReference type="PIRSF" id="PIRSF006205">
    <property type="entry name" value="Dxp_reductismrs"/>
    <property type="match status" value="1"/>
</dbReference>
<dbReference type="SUPFAM" id="SSF69055">
    <property type="entry name" value="1-deoxy-D-xylulose-5-phosphate reductoisomerase, C-terminal domain"/>
    <property type="match status" value="1"/>
</dbReference>
<dbReference type="SUPFAM" id="SSF55347">
    <property type="entry name" value="Glyceraldehyde-3-phosphate dehydrogenase-like, C-terminal domain"/>
    <property type="match status" value="1"/>
</dbReference>
<dbReference type="SUPFAM" id="SSF51735">
    <property type="entry name" value="NAD(P)-binding Rossmann-fold domains"/>
    <property type="match status" value="1"/>
</dbReference>
<keyword id="KW-0414">Isoprene biosynthesis</keyword>
<keyword id="KW-0464">Manganese</keyword>
<keyword id="KW-0479">Metal-binding</keyword>
<keyword id="KW-0521">NADP</keyword>
<keyword id="KW-0560">Oxidoreductase</keyword>
<evidence type="ECO:0000255" key="1">
    <source>
        <dbReference type="HAMAP-Rule" id="MF_00183"/>
    </source>
</evidence>
<proteinExistence type="inferred from homology"/>
<accession>B8ZRU7</accession>